<feature type="chain" id="PRO_0000124696" description="Membrane protein insertase YidC">
    <location>
        <begin position="1"/>
        <end position="532"/>
    </location>
</feature>
<feature type="transmembrane region" description="Helical" evidence="1">
    <location>
        <begin position="7"/>
        <end position="27"/>
    </location>
</feature>
<feature type="transmembrane region" description="Helical" evidence="1">
    <location>
        <begin position="336"/>
        <end position="356"/>
    </location>
</feature>
<feature type="transmembrane region" description="Helical" evidence="1">
    <location>
        <begin position="413"/>
        <end position="433"/>
    </location>
</feature>
<feature type="transmembrane region" description="Helical" evidence="1">
    <location>
        <begin position="450"/>
        <end position="470"/>
    </location>
</feature>
<feature type="transmembrane region" description="Helical" evidence="1">
    <location>
        <begin position="492"/>
        <end position="512"/>
    </location>
</feature>
<name>YIDC_BUCAI</name>
<organism>
    <name type="scientific">Buchnera aphidicola subsp. Acyrthosiphon pisum (strain APS)</name>
    <name type="common">Acyrthosiphon pisum symbiotic bacterium</name>
    <dbReference type="NCBI Taxonomy" id="107806"/>
    <lineage>
        <taxon>Bacteria</taxon>
        <taxon>Pseudomonadati</taxon>
        <taxon>Pseudomonadota</taxon>
        <taxon>Gammaproteobacteria</taxon>
        <taxon>Enterobacterales</taxon>
        <taxon>Erwiniaceae</taxon>
        <taxon>Buchnera</taxon>
    </lineage>
</organism>
<evidence type="ECO:0000255" key="1">
    <source>
        <dbReference type="HAMAP-Rule" id="MF_01810"/>
    </source>
</evidence>
<keyword id="KW-1003">Cell membrane</keyword>
<keyword id="KW-0143">Chaperone</keyword>
<keyword id="KW-0472">Membrane</keyword>
<keyword id="KW-0653">Protein transport</keyword>
<keyword id="KW-1185">Reference proteome</keyword>
<keyword id="KW-0812">Transmembrane</keyword>
<keyword id="KW-1133">Transmembrane helix</keyword>
<keyword id="KW-0813">Transport</keyword>
<reference key="1">
    <citation type="journal article" date="2000" name="Nature">
        <title>Genome sequence of the endocellular bacterial symbiont of aphids Buchnera sp. APS.</title>
        <authorList>
            <person name="Shigenobu S."/>
            <person name="Watanabe H."/>
            <person name="Hattori M."/>
            <person name="Sakaki Y."/>
            <person name="Ishikawa H."/>
        </authorList>
    </citation>
    <scope>NUCLEOTIDE SEQUENCE [LARGE SCALE GENOMIC DNA]</scope>
    <source>
        <strain>APS</strain>
    </source>
</reference>
<dbReference type="EMBL" id="BA000003">
    <property type="protein sequence ID" value="BAB12743.1"/>
    <property type="molecule type" value="Genomic_DNA"/>
</dbReference>
<dbReference type="RefSeq" id="NP_239857.1">
    <property type="nucleotide sequence ID" value="NC_002528.1"/>
</dbReference>
<dbReference type="RefSeq" id="WP_010895904.1">
    <property type="nucleotide sequence ID" value="NC_002528.1"/>
</dbReference>
<dbReference type="SMR" id="P57131"/>
<dbReference type="STRING" id="563178.BUAP5A_015"/>
<dbReference type="EnsemblBacteria" id="BAB12743">
    <property type="protein sequence ID" value="BAB12743"/>
    <property type="gene ID" value="BAB12743"/>
</dbReference>
<dbReference type="KEGG" id="buc:BU015"/>
<dbReference type="PATRIC" id="fig|107806.10.peg.28"/>
<dbReference type="eggNOG" id="COG0706">
    <property type="taxonomic scope" value="Bacteria"/>
</dbReference>
<dbReference type="HOGENOM" id="CLU_016535_3_0_6"/>
<dbReference type="Proteomes" id="UP000001806">
    <property type="component" value="Chromosome"/>
</dbReference>
<dbReference type="GO" id="GO:0005886">
    <property type="term" value="C:plasma membrane"/>
    <property type="evidence" value="ECO:0007669"/>
    <property type="project" value="UniProtKB-SubCell"/>
</dbReference>
<dbReference type="GO" id="GO:0032977">
    <property type="term" value="F:membrane insertase activity"/>
    <property type="evidence" value="ECO:0007669"/>
    <property type="project" value="InterPro"/>
</dbReference>
<dbReference type="GO" id="GO:0051205">
    <property type="term" value="P:protein insertion into membrane"/>
    <property type="evidence" value="ECO:0007669"/>
    <property type="project" value="TreeGrafter"/>
</dbReference>
<dbReference type="GO" id="GO:0015031">
    <property type="term" value="P:protein transport"/>
    <property type="evidence" value="ECO:0007669"/>
    <property type="project" value="UniProtKB-KW"/>
</dbReference>
<dbReference type="CDD" id="cd20070">
    <property type="entry name" value="5TM_YidC_Alb3"/>
    <property type="match status" value="1"/>
</dbReference>
<dbReference type="CDD" id="cd19961">
    <property type="entry name" value="EcYidC-like_peri"/>
    <property type="match status" value="1"/>
</dbReference>
<dbReference type="Gene3D" id="2.70.98.90">
    <property type="match status" value="1"/>
</dbReference>
<dbReference type="HAMAP" id="MF_01810">
    <property type="entry name" value="YidC_type1"/>
    <property type="match status" value="1"/>
</dbReference>
<dbReference type="InterPro" id="IPR019998">
    <property type="entry name" value="Membr_insert_YidC"/>
</dbReference>
<dbReference type="InterPro" id="IPR028053">
    <property type="entry name" value="Membr_insert_YidC_N"/>
</dbReference>
<dbReference type="InterPro" id="IPR001708">
    <property type="entry name" value="YidC/ALB3/OXA1/COX18"/>
</dbReference>
<dbReference type="InterPro" id="IPR028055">
    <property type="entry name" value="YidC/Oxa/ALB_C"/>
</dbReference>
<dbReference type="InterPro" id="IPR047196">
    <property type="entry name" value="YidC_ALB_C"/>
</dbReference>
<dbReference type="InterPro" id="IPR038221">
    <property type="entry name" value="YidC_periplasmic_sf"/>
</dbReference>
<dbReference type="NCBIfam" id="NF002351">
    <property type="entry name" value="PRK01318.1-1"/>
    <property type="match status" value="1"/>
</dbReference>
<dbReference type="NCBIfam" id="NF002352">
    <property type="entry name" value="PRK01318.1-3"/>
    <property type="match status" value="1"/>
</dbReference>
<dbReference type="NCBIfam" id="TIGR03593">
    <property type="entry name" value="yidC_nterm"/>
    <property type="match status" value="1"/>
</dbReference>
<dbReference type="NCBIfam" id="TIGR03592">
    <property type="entry name" value="yidC_oxa1_cterm"/>
    <property type="match status" value="1"/>
</dbReference>
<dbReference type="PANTHER" id="PTHR12428:SF65">
    <property type="entry name" value="CYTOCHROME C OXIDASE ASSEMBLY PROTEIN COX18, MITOCHONDRIAL"/>
    <property type="match status" value="1"/>
</dbReference>
<dbReference type="PANTHER" id="PTHR12428">
    <property type="entry name" value="OXA1"/>
    <property type="match status" value="1"/>
</dbReference>
<dbReference type="Pfam" id="PF02096">
    <property type="entry name" value="60KD_IMP"/>
    <property type="match status" value="1"/>
</dbReference>
<dbReference type="Pfam" id="PF14849">
    <property type="entry name" value="YidC_periplas"/>
    <property type="match status" value="1"/>
</dbReference>
<dbReference type="PRINTS" id="PR00701">
    <property type="entry name" value="60KDINNERMP"/>
</dbReference>
<dbReference type="PRINTS" id="PR01900">
    <property type="entry name" value="YIDCPROTEIN"/>
</dbReference>
<sequence>MEVQRNFFIFAFLFVSFLLWQAWQSQMFLNKKTNEKIDPIFHFIDVKKNKKKIFIKNDVISLVVNMYGGDVEEASLLAYKDTLYSSRPFKLLETGSDFIYQAQSGLIGKDGPDSSINDSRPLYSANKNFFVLGPNEKELRVPIKWLSKNGVIYKKTFILKPNRYDVQIEYDVYNPSKESLNMNIFGQIKQTINLPKKRNVYSGNFALQTFRGAAYSSDDNKYEKYKFDMIANNKNLHIMTESGWIAMLQQYFAVAWIPDNLGKNTIYTSSLDHDTAVIGYKSPIINIPPNSRSIIKSKLWIGPKIQKEMKLVAPNLDLTVDYGWLWFLSQPLFKLLTILYSIIGNWGFSIILITFIMRGLTYPLTKAQYISMAKMRALQPKIQEIKEKFSKDKQRISQEMILLYKKEKINPLGGFLPIFIQMPIFLSLYYMLIGSVELRHAPFLLWIHDLSSQDPYYVLPVIMGLTMFFIQKISSTNHISDPLQKKIMNFMPVIFTAFFLWFPSGLVLYYIISNLVTIIQQKFILSNLEKNR</sequence>
<comment type="function">
    <text evidence="1">Required for the insertion and/or proper folding and/or complex formation of integral membrane proteins into the membrane. Involved in integration of membrane proteins that insert both dependently and independently of the Sec translocase complex, as well as at least some lipoproteins. Aids folding of multispanning membrane proteins.</text>
</comment>
<comment type="subunit">
    <text evidence="1">Interacts with the Sec translocase complex via SecD. Specifically interacts with transmembrane segments of nascent integral membrane proteins during membrane integration.</text>
</comment>
<comment type="subcellular location">
    <subcellularLocation>
        <location evidence="1">Cell membrane</location>
        <topology evidence="1">Multi-pass membrane protein</topology>
    </subcellularLocation>
</comment>
<comment type="similarity">
    <text evidence="1">Belongs to the OXA1/ALB3/YidC family. Type 1 subfamily.</text>
</comment>
<gene>
    <name evidence="1" type="primary">yidC</name>
    <name type="ordered locus">BU015</name>
</gene>
<accession>P57131</accession>
<protein>
    <recommendedName>
        <fullName evidence="1">Membrane protein insertase YidC</fullName>
    </recommendedName>
    <alternativeName>
        <fullName evidence="1">Foldase YidC</fullName>
    </alternativeName>
    <alternativeName>
        <fullName evidence="1">Membrane integrase YidC</fullName>
    </alternativeName>
    <alternativeName>
        <fullName evidence="1">Membrane protein YidC</fullName>
    </alternativeName>
</protein>
<proteinExistence type="inferred from homology"/>